<keyword id="KW-0378">Hydrolase</keyword>
<keyword id="KW-0460">Magnesium</keyword>
<keyword id="KW-0479">Metal-binding</keyword>
<keyword id="KW-0546">Nucleotide metabolism</keyword>
<accession>B8JFZ2</accession>
<evidence type="ECO:0000255" key="1">
    <source>
        <dbReference type="HAMAP-Rule" id="MF_00116"/>
    </source>
</evidence>
<proteinExistence type="inferred from homology"/>
<name>DUT_ANAD2</name>
<protein>
    <recommendedName>
        <fullName evidence="1">Deoxyuridine 5'-triphosphate nucleotidohydrolase</fullName>
        <shortName evidence="1">dUTPase</shortName>
        <ecNumber evidence="1">3.6.1.23</ecNumber>
    </recommendedName>
    <alternativeName>
        <fullName evidence="1">dUTP pyrophosphatase</fullName>
    </alternativeName>
</protein>
<organism>
    <name type="scientific">Anaeromyxobacter dehalogenans (strain 2CP-1 / ATCC BAA-258)</name>
    <dbReference type="NCBI Taxonomy" id="455488"/>
    <lineage>
        <taxon>Bacteria</taxon>
        <taxon>Pseudomonadati</taxon>
        <taxon>Myxococcota</taxon>
        <taxon>Myxococcia</taxon>
        <taxon>Myxococcales</taxon>
        <taxon>Cystobacterineae</taxon>
        <taxon>Anaeromyxobacteraceae</taxon>
        <taxon>Anaeromyxobacter</taxon>
    </lineage>
</organism>
<feature type="chain" id="PRO_1000119223" description="Deoxyuridine 5'-triphosphate nucleotidohydrolase">
    <location>
        <begin position="1"/>
        <end position="147"/>
    </location>
</feature>
<feature type="binding site" evidence="1">
    <location>
        <begin position="67"/>
        <end position="69"/>
    </location>
    <ligand>
        <name>substrate</name>
    </ligand>
</feature>
<feature type="binding site" evidence="1">
    <location>
        <position position="80"/>
    </location>
    <ligand>
        <name>substrate</name>
    </ligand>
</feature>
<feature type="binding site" evidence="1">
    <location>
        <begin position="84"/>
        <end position="86"/>
    </location>
    <ligand>
        <name>substrate</name>
    </ligand>
</feature>
<comment type="function">
    <text evidence="1">This enzyme is involved in nucleotide metabolism: it produces dUMP, the immediate precursor of thymidine nucleotides and it decreases the intracellular concentration of dUTP so that uracil cannot be incorporated into DNA.</text>
</comment>
<comment type="catalytic activity">
    <reaction evidence="1">
        <text>dUTP + H2O = dUMP + diphosphate + H(+)</text>
        <dbReference type="Rhea" id="RHEA:10248"/>
        <dbReference type="ChEBI" id="CHEBI:15377"/>
        <dbReference type="ChEBI" id="CHEBI:15378"/>
        <dbReference type="ChEBI" id="CHEBI:33019"/>
        <dbReference type="ChEBI" id="CHEBI:61555"/>
        <dbReference type="ChEBI" id="CHEBI:246422"/>
        <dbReference type="EC" id="3.6.1.23"/>
    </reaction>
</comment>
<comment type="cofactor">
    <cofactor evidence="1">
        <name>Mg(2+)</name>
        <dbReference type="ChEBI" id="CHEBI:18420"/>
    </cofactor>
</comment>
<comment type="pathway">
    <text evidence="1">Pyrimidine metabolism; dUMP biosynthesis; dUMP from dCTP (dUTP route): step 2/2.</text>
</comment>
<comment type="similarity">
    <text evidence="1">Belongs to the dUTPase family.</text>
</comment>
<sequence length="147" mass="15308">MPVTVRVRRVGHRGPPLDLPRYESAGAAGLDLRADEPFTLAPGERRVVPTGLALELPPGHEGQVRPRSGLAARHGVGMVNAPGTIDADYRGEVGVILVNHGQAPVAFARGDRIAQLVIAPVVRAELELVDALSDSDRGAGGFGSTGQ</sequence>
<reference key="1">
    <citation type="submission" date="2009-01" db="EMBL/GenBank/DDBJ databases">
        <title>Complete sequence of Anaeromyxobacter dehalogenans 2CP-1.</title>
        <authorList>
            <person name="Lucas S."/>
            <person name="Copeland A."/>
            <person name="Lapidus A."/>
            <person name="Glavina del Rio T."/>
            <person name="Dalin E."/>
            <person name="Tice H."/>
            <person name="Bruce D."/>
            <person name="Goodwin L."/>
            <person name="Pitluck S."/>
            <person name="Saunders E."/>
            <person name="Brettin T."/>
            <person name="Detter J.C."/>
            <person name="Han C."/>
            <person name="Larimer F."/>
            <person name="Land M."/>
            <person name="Hauser L."/>
            <person name="Kyrpides N."/>
            <person name="Ovchinnikova G."/>
            <person name="Beliaev A.S."/>
            <person name="Richardson P."/>
        </authorList>
    </citation>
    <scope>NUCLEOTIDE SEQUENCE [LARGE SCALE GENOMIC DNA]</scope>
    <source>
        <strain>2CP-1 / ATCC BAA-258</strain>
    </source>
</reference>
<dbReference type="EC" id="3.6.1.23" evidence="1"/>
<dbReference type="EMBL" id="CP001359">
    <property type="protein sequence ID" value="ACL64580.1"/>
    <property type="molecule type" value="Genomic_DNA"/>
</dbReference>
<dbReference type="RefSeq" id="WP_012525226.1">
    <property type="nucleotide sequence ID" value="NC_011891.1"/>
</dbReference>
<dbReference type="SMR" id="B8JFZ2"/>
<dbReference type="KEGG" id="acp:A2cp1_1236"/>
<dbReference type="HOGENOM" id="CLU_068508_1_2_7"/>
<dbReference type="UniPathway" id="UPA00610">
    <property type="reaction ID" value="UER00666"/>
</dbReference>
<dbReference type="Proteomes" id="UP000007089">
    <property type="component" value="Chromosome"/>
</dbReference>
<dbReference type="GO" id="GO:0004170">
    <property type="term" value="F:dUTP diphosphatase activity"/>
    <property type="evidence" value="ECO:0007669"/>
    <property type="project" value="UniProtKB-UniRule"/>
</dbReference>
<dbReference type="GO" id="GO:0000287">
    <property type="term" value="F:magnesium ion binding"/>
    <property type="evidence" value="ECO:0007669"/>
    <property type="project" value="UniProtKB-UniRule"/>
</dbReference>
<dbReference type="GO" id="GO:0006226">
    <property type="term" value="P:dUMP biosynthetic process"/>
    <property type="evidence" value="ECO:0007669"/>
    <property type="project" value="UniProtKB-UniRule"/>
</dbReference>
<dbReference type="GO" id="GO:0046081">
    <property type="term" value="P:dUTP catabolic process"/>
    <property type="evidence" value="ECO:0007669"/>
    <property type="project" value="InterPro"/>
</dbReference>
<dbReference type="CDD" id="cd07557">
    <property type="entry name" value="trimeric_dUTPase"/>
    <property type="match status" value="1"/>
</dbReference>
<dbReference type="Gene3D" id="2.70.40.10">
    <property type="match status" value="1"/>
</dbReference>
<dbReference type="HAMAP" id="MF_00116">
    <property type="entry name" value="dUTPase_bact"/>
    <property type="match status" value="1"/>
</dbReference>
<dbReference type="InterPro" id="IPR008181">
    <property type="entry name" value="dUTPase"/>
</dbReference>
<dbReference type="InterPro" id="IPR029054">
    <property type="entry name" value="dUTPase-like"/>
</dbReference>
<dbReference type="InterPro" id="IPR036157">
    <property type="entry name" value="dUTPase-like_sf"/>
</dbReference>
<dbReference type="InterPro" id="IPR033704">
    <property type="entry name" value="dUTPase_trimeric"/>
</dbReference>
<dbReference type="NCBIfam" id="TIGR00576">
    <property type="entry name" value="dut"/>
    <property type="match status" value="1"/>
</dbReference>
<dbReference type="NCBIfam" id="NF001862">
    <property type="entry name" value="PRK00601.1"/>
    <property type="match status" value="1"/>
</dbReference>
<dbReference type="PANTHER" id="PTHR11241">
    <property type="entry name" value="DEOXYURIDINE 5'-TRIPHOSPHATE NUCLEOTIDOHYDROLASE"/>
    <property type="match status" value="1"/>
</dbReference>
<dbReference type="PANTHER" id="PTHR11241:SF0">
    <property type="entry name" value="DEOXYURIDINE 5'-TRIPHOSPHATE NUCLEOTIDOHYDROLASE"/>
    <property type="match status" value="1"/>
</dbReference>
<dbReference type="Pfam" id="PF00692">
    <property type="entry name" value="dUTPase"/>
    <property type="match status" value="1"/>
</dbReference>
<dbReference type="SUPFAM" id="SSF51283">
    <property type="entry name" value="dUTPase-like"/>
    <property type="match status" value="1"/>
</dbReference>
<gene>
    <name evidence="1" type="primary">dut</name>
    <name type="ordered locus">A2cp1_1236</name>
</gene>